<sequence>MNERSLRVLEYNKIIHMLEDKCTSSLGREKLKELKPISNFEQITTWQKETSEAQSILIHRGNIPLGGIHDVSQYLRRTEIGSYLDPGQLLQLKETLAAARRMKTFLKDDKKESTYPIIQELGNNISSLKHIEDKIELCIISETELSDNASPELRNIRRQISSKNDAIRNKLNSIITSASNQKYLQDPIITMRQDRYVVPVKQEHRGNIPGLIHDQSSSGATIFVEPMAVVELNNQLKELRLKEQVEIERILMEIAAMIAERSDDIKSNQIILKELDFIFAKGKLSVEMRAVEPVLNTNKKISIKNGRHPLLPSNKVVPNTMWLGEDFHTLVITGPNTGGKTVTLKTLGLLTLMAQSGLHVPADYGTKLAIFDQVFADIGDEQSIEQSLSTFSSHMTNIVNIMDNVTEQSLVLFDELGAGTDPTEGAALAMAILNSLREMGTVTVATTHYSELKQYALSTEGVENASVEFDVNTLSPTYKLLIGVPGKSNAFEISRKLGLSDFLIQRSKELLTREDIQFEDLLQNIEKNRSTAEKEKDEAARLRMETQKLREEYYEKKQQLQTQKEKLISDAKREAYKIVKQAKLDADEIVENLKTLRAELEEKEMNKKIEEARKNLSDQMGKLAENMGEKLVLKTNKKPPKNLKIGESVNILSLNQIGYVILPEDANGEVQLQVGIMKVNMHVSNLERIKEEKDTKKTGVGKIVKSKAENIKMEIDVRGQNLEEAMLNVDKYLDDAYIAGLTHVTIIHGVGTGVLSAGLKQMLKKHKHTKSFREGEYGEGGMGVTIVHLK</sequence>
<feature type="chain" id="PRO_1000093339" description="Endonuclease MutS2">
    <location>
        <begin position="1"/>
        <end position="790"/>
    </location>
</feature>
<feature type="domain" description="Smr" evidence="1">
    <location>
        <begin position="715"/>
        <end position="790"/>
    </location>
</feature>
<feature type="binding site" evidence="1">
    <location>
        <begin position="334"/>
        <end position="341"/>
    </location>
    <ligand>
        <name>ATP</name>
        <dbReference type="ChEBI" id="CHEBI:30616"/>
    </ligand>
</feature>
<dbReference type="EC" id="3.1.-.-" evidence="1"/>
<dbReference type="EC" id="3.6.4.-" evidence="1"/>
<dbReference type="EMBL" id="CP000853">
    <property type="protein sequence ID" value="ABW19376.1"/>
    <property type="molecule type" value="Genomic_DNA"/>
</dbReference>
<dbReference type="RefSeq" id="WP_012159688.1">
    <property type="nucleotide sequence ID" value="NC_009922.1"/>
</dbReference>
<dbReference type="SMR" id="A8MHU4"/>
<dbReference type="STRING" id="350688.Clos_1836"/>
<dbReference type="KEGG" id="aoe:Clos_1836"/>
<dbReference type="eggNOG" id="COG1193">
    <property type="taxonomic scope" value="Bacteria"/>
</dbReference>
<dbReference type="HOGENOM" id="CLU_011252_2_1_9"/>
<dbReference type="OrthoDB" id="9808166at2"/>
<dbReference type="Proteomes" id="UP000000269">
    <property type="component" value="Chromosome"/>
</dbReference>
<dbReference type="GO" id="GO:0005524">
    <property type="term" value="F:ATP binding"/>
    <property type="evidence" value="ECO:0007669"/>
    <property type="project" value="UniProtKB-UniRule"/>
</dbReference>
<dbReference type="GO" id="GO:0016887">
    <property type="term" value="F:ATP hydrolysis activity"/>
    <property type="evidence" value="ECO:0007669"/>
    <property type="project" value="InterPro"/>
</dbReference>
<dbReference type="GO" id="GO:0140664">
    <property type="term" value="F:ATP-dependent DNA damage sensor activity"/>
    <property type="evidence" value="ECO:0007669"/>
    <property type="project" value="InterPro"/>
</dbReference>
<dbReference type="GO" id="GO:0004519">
    <property type="term" value="F:endonuclease activity"/>
    <property type="evidence" value="ECO:0007669"/>
    <property type="project" value="UniProtKB-UniRule"/>
</dbReference>
<dbReference type="GO" id="GO:0030983">
    <property type="term" value="F:mismatched DNA binding"/>
    <property type="evidence" value="ECO:0007669"/>
    <property type="project" value="InterPro"/>
</dbReference>
<dbReference type="GO" id="GO:0043023">
    <property type="term" value="F:ribosomal large subunit binding"/>
    <property type="evidence" value="ECO:0007669"/>
    <property type="project" value="UniProtKB-UniRule"/>
</dbReference>
<dbReference type="GO" id="GO:0019843">
    <property type="term" value="F:rRNA binding"/>
    <property type="evidence" value="ECO:0007669"/>
    <property type="project" value="UniProtKB-UniRule"/>
</dbReference>
<dbReference type="GO" id="GO:0006298">
    <property type="term" value="P:mismatch repair"/>
    <property type="evidence" value="ECO:0007669"/>
    <property type="project" value="InterPro"/>
</dbReference>
<dbReference type="GO" id="GO:0045910">
    <property type="term" value="P:negative regulation of DNA recombination"/>
    <property type="evidence" value="ECO:0007669"/>
    <property type="project" value="InterPro"/>
</dbReference>
<dbReference type="GO" id="GO:0072344">
    <property type="term" value="P:rescue of stalled ribosome"/>
    <property type="evidence" value="ECO:0007669"/>
    <property type="project" value="UniProtKB-UniRule"/>
</dbReference>
<dbReference type="CDD" id="cd03280">
    <property type="entry name" value="ABC_MutS2"/>
    <property type="match status" value="1"/>
</dbReference>
<dbReference type="CDD" id="cd06503">
    <property type="entry name" value="ATP-synt_Fo_b"/>
    <property type="match status" value="1"/>
</dbReference>
<dbReference type="FunFam" id="3.40.50.300:FF:000830">
    <property type="entry name" value="Endonuclease MutS2"/>
    <property type="match status" value="1"/>
</dbReference>
<dbReference type="Gene3D" id="3.30.1370.110">
    <property type="match status" value="1"/>
</dbReference>
<dbReference type="Gene3D" id="3.40.50.300">
    <property type="entry name" value="P-loop containing nucleotide triphosphate hydrolases"/>
    <property type="match status" value="1"/>
</dbReference>
<dbReference type="HAMAP" id="MF_00092">
    <property type="entry name" value="MutS2"/>
    <property type="match status" value="1"/>
</dbReference>
<dbReference type="InterPro" id="IPR000432">
    <property type="entry name" value="DNA_mismatch_repair_MutS_C"/>
</dbReference>
<dbReference type="InterPro" id="IPR007696">
    <property type="entry name" value="DNA_mismatch_repair_MutS_core"/>
</dbReference>
<dbReference type="InterPro" id="IPR036187">
    <property type="entry name" value="DNA_mismatch_repair_MutS_sf"/>
</dbReference>
<dbReference type="InterPro" id="IPR046893">
    <property type="entry name" value="MSSS"/>
</dbReference>
<dbReference type="InterPro" id="IPR045076">
    <property type="entry name" value="MutS"/>
</dbReference>
<dbReference type="InterPro" id="IPR005747">
    <property type="entry name" value="MutS2"/>
</dbReference>
<dbReference type="InterPro" id="IPR027417">
    <property type="entry name" value="P-loop_NTPase"/>
</dbReference>
<dbReference type="InterPro" id="IPR002625">
    <property type="entry name" value="Smr_dom"/>
</dbReference>
<dbReference type="InterPro" id="IPR036063">
    <property type="entry name" value="Smr_dom_sf"/>
</dbReference>
<dbReference type="NCBIfam" id="TIGR01069">
    <property type="entry name" value="mutS2"/>
    <property type="match status" value="1"/>
</dbReference>
<dbReference type="PANTHER" id="PTHR48466:SF2">
    <property type="entry name" value="OS10G0509000 PROTEIN"/>
    <property type="match status" value="1"/>
</dbReference>
<dbReference type="PANTHER" id="PTHR48466">
    <property type="entry name" value="OS10G0509000 PROTEIN-RELATED"/>
    <property type="match status" value="1"/>
</dbReference>
<dbReference type="Pfam" id="PF20297">
    <property type="entry name" value="MSSS"/>
    <property type="match status" value="1"/>
</dbReference>
<dbReference type="Pfam" id="PF00488">
    <property type="entry name" value="MutS_V"/>
    <property type="match status" value="1"/>
</dbReference>
<dbReference type="Pfam" id="PF01713">
    <property type="entry name" value="Smr"/>
    <property type="match status" value="1"/>
</dbReference>
<dbReference type="PIRSF" id="PIRSF005814">
    <property type="entry name" value="MutS_YshD"/>
    <property type="match status" value="1"/>
</dbReference>
<dbReference type="SMART" id="SM00534">
    <property type="entry name" value="MUTSac"/>
    <property type="match status" value="1"/>
</dbReference>
<dbReference type="SMART" id="SM00533">
    <property type="entry name" value="MUTSd"/>
    <property type="match status" value="1"/>
</dbReference>
<dbReference type="SMART" id="SM00463">
    <property type="entry name" value="SMR"/>
    <property type="match status" value="1"/>
</dbReference>
<dbReference type="SUPFAM" id="SSF48334">
    <property type="entry name" value="DNA repair protein MutS, domain III"/>
    <property type="match status" value="1"/>
</dbReference>
<dbReference type="SUPFAM" id="SSF52540">
    <property type="entry name" value="P-loop containing nucleoside triphosphate hydrolases"/>
    <property type="match status" value="1"/>
</dbReference>
<dbReference type="SUPFAM" id="SSF160443">
    <property type="entry name" value="SMR domain-like"/>
    <property type="match status" value="1"/>
</dbReference>
<dbReference type="PROSITE" id="PS00486">
    <property type="entry name" value="DNA_MISMATCH_REPAIR_2"/>
    <property type="match status" value="1"/>
</dbReference>
<dbReference type="PROSITE" id="PS50828">
    <property type="entry name" value="SMR"/>
    <property type="match status" value="1"/>
</dbReference>
<keyword id="KW-0067">ATP-binding</keyword>
<keyword id="KW-0238">DNA-binding</keyword>
<keyword id="KW-0255">Endonuclease</keyword>
<keyword id="KW-0378">Hydrolase</keyword>
<keyword id="KW-0540">Nuclease</keyword>
<keyword id="KW-0547">Nucleotide-binding</keyword>
<keyword id="KW-1185">Reference proteome</keyword>
<keyword id="KW-0694">RNA-binding</keyword>
<keyword id="KW-0699">rRNA-binding</keyword>
<reference key="1">
    <citation type="submission" date="2007-10" db="EMBL/GenBank/DDBJ databases">
        <title>Complete genome of Alkaliphilus oremlandii OhILAs.</title>
        <authorList>
            <person name="Copeland A."/>
            <person name="Lucas S."/>
            <person name="Lapidus A."/>
            <person name="Barry K."/>
            <person name="Detter J.C."/>
            <person name="Glavina del Rio T."/>
            <person name="Hammon N."/>
            <person name="Israni S."/>
            <person name="Dalin E."/>
            <person name="Tice H."/>
            <person name="Pitluck S."/>
            <person name="Chain P."/>
            <person name="Malfatti S."/>
            <person name="Shin M."/>
            <person name="Vergez L."/>
            <person name="Schmutz J."/>
            <person name="Larimer F."/>
            <person name="Land M."/>
            <person name="Hauser L."/>
            <person name="Kyrpides N."/>
            <person name="Mikhailova N."/>
            <person name="Stolz J.F."/>
            <person name="Dawson A."/>
            <person name="Fisher E."/>
            <person name="Crable B."/>
            <person name="Perera E."/>
            <person name="Lisak J."/>
            <person name="Ranganathan M."/>
            <person name="Basu P."/>
            <person name="Richardson P."/>
        </authorList>
    </citation>
    <scope>NUCLEOTIDE SEQUENCE [LARGE SCALE GENOMIC DNA]</scope>
    <source>
        <strain>OhILAs</strain>
    </source>
</reference>
<evidence type="ECO:0000255" key="1">
    <source>
        <dbReference type="HAMAP-Rule" id="MF_00092"/>
    </source>
</evidence>
<organism>
    <name type="scientific">Alkaliphilus oremlandii (strain OhILAs)</name>
    <name type="common">Clostridium oremlandii (strain OhILAs)</name>
    <dbReference type="NCBI Taxonomy" id="350688"/>
    <lineage>
        <taxon>Bacteria</taxon>
        <taxon>Bacillati</taxon>
        <taxon>Bacillota</taxon>
        <taxon>Clostridia</taxon>
        <taxon>Peptostreptococcales</taxon>
        <taxon>Natronincolaceae</taxon>
        <taxon>Alkaliphilus</taxon>
    </lineage>
</organism>
<gene>
    <name evidence="1" type="primary">mutS2</name>
    <name evidence="1" type="synonym">rqcU</name>
    <name type="ordered locus">Clos_1836</name>
</gene>
<proteinExistence type="inferred from homology"/>
<protein>
    <recommendedName>
        <fullName evidence="1">Endonuclease MutS2</fullName>
        <ecNumber evidence="1">3.1.-.-</ecNumber>
    </recommendedName>
    <alternativeName>
        <fullName evidence="1">Ribosome-associated protein quality control-upstream factor</fullName>
        <shortName evidence="1">RQC-upstream factor</shortName>
        <shortName evidence="1">RqcU</shortName>
        <ecNumber evidence="1">3.6.4.-</ecNumber>
    </alternativeName>
</protein>
<accession>A8MHU4</accession>
<comment type="function">
    <text evidence="1">Endonuclease that is involved in the suppression of homologous recombination and thus may have a key role in the control of bacterial genetic diversity.</text>
</comment>
<comment type="function">
    <text evidence="1">Acts as a ribosome collision sensor, splitting the ribosome into its 2 subunits. Detects stalled/collided 70S ribosomes which it binds and splits by an ATP-hydrolysis driven conformational change. Acts upstream of the ribosome quality control system (RQC), a ribosome-associated complex that mediates the extraction of incompletely synthesized nascent chains from stalled ribosomes and their subsequent degradation. Probably generates substrates for RQC.</text>
</comment>
<comment type="subunit">
    <text evidence="1">Homodimer. Binds to stalled ribosomes, contacting rRNA.</text>
</comment>
<comment type="similarity">
    <text evidence="1">Belongs to the DNA mismatch repair MutS family. MutS2 subfamily.</text>
</comment>
<name>MUTS2_ALKOO</name>